<name>ATPF_ALISL</name>
<evidence type="ECO:0000255" key="1">
    <source>
        <dbReference type="HAMAP-Rule" id="MF_01398"/>
    </source>
</evidence>
<keyword id="KW-0066">ATP synthesis</keyword>
<keyword id="KW-0997">Cell inner membrane</keyword>
<keyword id="KW-1003">Cell membrane</keyword>
<keyword id="KW-0138">CF(0)</keyword>
<keyword id="KW-0375">Hydrogen ion transport</keyword>
<keyword id="KW-0406">Ion transport</keyword>
<keyword id="KW-0472">Membrane</keyword>
<keyword id="KW-0812">Transmembrane</keyword>
<keyword id="KW-1133">Transmembrane helix</keyword>
<keyword id="KW-0813">Transport</keyword>
<protein>
    <recommendedName>
        <fullName evidence="1">ATP synthase subunit b</fullName>
    </recommendedName>
    <alternativeName>
        <fullName evidence="1">ATP synthase F(0) sector subunit b</fullName>
    </alternativeName>
    <alternativeName>
        <fullName evidence="1">ATPase subunit I</fullName>
    </alternativeName>
    <alternativeName>
        <fullName evidence="1">F-type ATPase subunit b</fullName>
        <shortName evidence="1">F-ATPase subunit b</shortName>
    </alternativeName>
</protein>
<organism>
    <name type="scientific">Aliivibrio salmonicida (strain LFI1238)</name>
    <name type="common">Vibrio salmonicida (strain LFI1238)</name>
    <dbReference type="NCBI Taxonomy" id="316275"/>
    <lineage>
        <taxon>Bacteria</taxon>
        <taxon>Pseudomonadati</taxon>
        <taxon>Pseudomonadota</taxon>
        <taxon>Gammaproteobacteria</taxon>
        <taxon>Vibrionales</taxon>
        <taxon>Vibrionaceae</taxon>
        <taxon>Aliivibrio</taxon>
    </lineage>
</organism>
<sequence>MNMNATLLGQAIAFALFVWFCMKYVWPPIMEAIEERQKKIADGLSAAERAAKDLDLAQANASDQLKEAKRAATEIIEQANKRKGQILDEAREEALTERQNILTQGEAELETERNRARDELRKQVATLAVIGAEKILERSINLEAQKDILDNITAKL</sequence>
<comment type="function">
    <text evidence="1">F(1)F(0) ATP synthase produces ATP from ADP in the presence of a proton or sodium gradient. F-type ATPases consist of two structural domains, F(1) containing the extramembraneous catalytic core and F(0) containing the membrane proton channel, linked together by a central stalk and a peripheral stalk. During catalysis, ATP synthesis in the catalytic domain of F(1) is coupled via a rotary mechanism of the central stalk subunits to proton translocation.</text>
</comment>
<comment type="function">
    <text evidence="1">Component of the F(0) channel, it forms part of the peripheral stalk, linking F(1) to F(0).</text>
</comment>
<comment type="subunit">
    <text evidence="1">F-type ATPases have 2 components, F(1) - the catalytic core - and F(0) - the membrane proton channel. F(1) has five subunits: alpha(3), beta(3), gamma(1), delta(1), epsilon(1). F(0) has three main subunits: a(1), b(2) and c(10-14). The alpha and beta chains form an alternating ring which encloses part of the gamma chain. F(1) is attached to F(0) by a central stalk formed by the gamma and epsilon chains, while a peripheral stalk is formed by the delta and b chains.</text>
</comment>
<comment type="subcellular location">
    <subcellularLocation>
        <location evidence="1">Cell inner membrane</location>
        <topology evidence="1">Single-pass membrane protein</topology>
    </subcellularLocation>
</comment>
<comment type="similarity">
    <text evidence="1">Belongs to the ATPase B chain family.</text>
</comment>
<reference key="1">
    <citation type="journal article" date="2008" name="BMC Genomics">
        <title>The genome sequence of the fish pathogen Aliivibrio salmonicida strain LFI1238 shows extensive evidence of gene decay.</title>
        <authorList>
            <person name="Hjerde E."/>
            <person name="Lorentzen M.S."/>
            <person name="Holden M.T."/>
            <person name="Seeger K."/>
            <person name="Paulsen S."/>
            <person name="Bason N."/>
            <person name="Churcher C."/>
            <person name="Harris D."/>
            <person name="Norbertczak H."/>
            <person name="Quail M.A."/>
            <person name="Sanders S."/>
            <person name="Thurston S."/>
            <person name="Parkhill J."/>
            <person name="Willassen N.P."/>
            <person name="Thomson N.R."/>
        </authorList>
    </citation>
    <scope>NUCLEOTIDE SEQUENCE [LARGE SCALE GENOMIC DNA]</scope>
    <source>
        <strain>LFI1238</strain>
    </source>
</reference>
<proteinExistence type="inferred from homology"/>
<accession>B6EHU1</accession>
<gene>
    <name evidence="1" type="primary">atpF</name>
    <name type="ordered locus">VSAL_I3063</name>
</gene>
<dbReference type="EMBL" id="FM178379">
    <property type="protein sequence ID" value="CAQ80747.1"/>
    <property type="molecule type" value="Genomic_DNA"/>
</dbReference>
<dbReference type="RefSeq" id="WP_012551446.1">
    <property type="nucleotide sequence ID" value="NC_011312.1"/>
</dbReference>
<dbReference type="SMR" id="B6EHU1"/>
<dbReference type="KEGG" id="vsa:VSAL_I3063"/>
<dbReference type="eggNOG" id="COG0711">
    <property type="taxonomic scope" value="Bacteria"/>
</dbReference>
<dbReference type="HOGENOM" id="CLU_079215_4_5_6"/>
<dbReference type="Proteomes" id="UP000001730">
    <property type="component" value="Chromosome 1"/>
</dbReference>
<dbReference type="GO" id="GO:0005886">
    <property type="term" value="C:plasma membrane"/>
    <property type="evidence" value="ECO:0007669"/>
    <property type="project" value="UniProtKB-SubCell"/>
</dbReference>
<dbReference type="GO" id="GO:0045259">
    <property type="term" value="C:proton-transporting ATP synthase complex"/>
    <property type="evidence" value="ECO:0007669"/>
    <property type="project" value="UniProtKB-KW"/>
</dbReference>
<dbReference type="GO" id="GO:0046933">
    <property type="term" value="F:proton-transporting ATP synthase activity, rotational mechanism"/>
    <property type="evidence" value="ECO:0007669"/>
    <property type="project" value="UniProtKB-UniRule"/>
</dbReference>
<dbReference type="GO" id="GO:0046961">
    <property type="term" value="F:proton-transporting ATPase activity, rotational mechanism"/>
    <property type="evidence" value="ECO:0007669"/>
    <property type="project" value="TreeGrafter"/>
</dbReference>
<dbReference type="CDD" id="cd06503">
    <property type="entry name" value="ATP-synt_Fo_b"/>
    <property type="match status" value="1"/>
</dbReference>
<dbReference type="FunFam" id="1.20.5.620:FF:000001">
    <property type="entry name" value="ATP synthase subunit b"/>
    <property type="match status" value="1"/>
</dbReference>
<dbReference type="Gene3D" id="6.10.250.1580">
    <property type="match status" value="1"/>
</dbReference>
<dbReference type="HAMAP" id="MF_01398">
    <property type="entry name" value="ATP_synth_b_bprime"/>
    <property type="match status" value="1"/>
</dbReference>
<dbReference type="InterPro" id="IPR028987">
    <property type="entry name" value="ATP_synth_B-like_membr_sf"/>
</dbReference>
<dbReference type="InterPro" id="IPR002146">
    <property type="entry name" value="ATP_synth_b/b'su_bac/chlpt"/>
</dbReference>
<dbReference type="InterPro" id="IPR005864">
    <property type="entry name" value="ATP_synth_F0_bsu_bac"/>
</dbReference>
<dbReference type="InterPro" id="IPR050059">
    <property type="entry name" value="ATP_synthase_B_chain"/>
</dbReference>
<dbReference type="NCBIfam" id="TIGR01144">
    <property type="entry name" value="ATP_synt_b"/>
    <property type="match status" value="1"/>
</dbReference>
<dbReference type="NCBIfam" id="NF004411">
    <property type="entry name" value="PRK05759.1-2"/>
    <property type="match status" value="1"/>
</dbReference>
<dbReference type="NCBIfam" id="NF004413">
    <property type="entry name" value="PRK05759.1-4"/>
    <property type="match status" value="1"/>
</dbReference>
<dbReference type="PANTHER" id="PTHR33445:SF1">
    <property type="entry name" value="ATP SYNTHASE SUBUNIT B"/>
    <property type="match status" value="1"/>
</dbReference>
<dbReference type="PANTHER" id="PTHR33445">
    <property type="entry name" value="ATP SYNTHASE SUBUNIT B', CHLOROPLASTIC"/>
    <property type="match status" value="1"/>
</dbReference>
<dbReference type="Pfam" id="PF00430">
    <property type="entry name" value="ATP-synt_B"/>
    <property type="match status" value="1"/>
</dbReference>
<dbReference type="SUPFAM" id="SSF81573">
    <property type="entry name" value="F1F0 ATP synthase subunit B, membrane domain"/>
    <property type="match status" value="1"/>
</dbReference>
<feature type="chain" id="PRO_0000368304" description="ATP synthase subunit b">
    <location>
        <begin position="1"/>
        <end position="156"/>
    </location>
</feature>
<feature type="transmembrane region" description="Helical" evidence="1">
    <location>
        <begin position="7"/>
        <end position="29"/>
    </location>
</feature>